<comment type="function">
    <text evidence="5 12">Probable peripherally associated component of the endosomal sorting required for transport complex III (ESCRT-III) which is involved in multivesicular bodies (MVBs) formation and sorting of endosomal cargo proteins into MVBs. MVBs contain intraluminal vesicles (ILVs) that are generated by invagination and scission from the limiting membrane of the endosome and mostly are delivered to lysosomes enabling degradation of membrane proteins, such as stimulated growth factor receptors, lysosomal enzymes and lipids. The MVB pathway appears to require the sequential function of ESCRT-O, -I,-II and -III complexes. ESCRT-III proteins mostly dissociate from the invaginating membrane before the ILV is released. The ESCRT machinery also functions in topologically equivalent membrane fission events, such as the terminal stages of cytokinesis and the budding of enveloped viruses (HIV-1 and other lentiviruses). ESCRT-III proteins are believed to mediate the necessary vesicle extrusion and/or membrane fission activities, possibly in conjunction with the AAA ATPase VPS4. Involved in cytokinesis. Involved in recruiting VPS4A and/or VPS4B and SPAST to the midbody of dividing cells. Involved in HIV-1 p6- and p9-dependent virus release.</text>
</comment>
<comment type="subunit">
    <text evidence="4 5 6 7 8 9 10 11 12 13 14">Probable peripherally associated component of the endosomal sorting required for transport complex III (ESCRT-III). ESCRT-III components are thought to multimerize to form a flat lattice on the perimeter membrane of the endosome. Several assembly forms of ESCRT-III may exist that interact and act sequentially. Interacts with CHMP1A. Interacts with VTA1; the interaction probably involves the open conformation of CHMP1B. Interacts with CHMP2A. Interacts with VPS4A; the interaction is direct. Interacts with VPS4B; the interaction is direct. Interacts with SPAST (via MIT domain); the interaction is direct. Interacts with IST1. Interacts with MITD1. Interacts with STAMBP.</text>
</comment>
<comment type="interaction">
    <interactant intactId="EBI-2118090">
        <id>Q7LBR1</id>
    </interactant>
    <interactant intactId="EBI-1057156">
        <id>Q9HD42</id>
        <label>CHMP1A</label>
    </interactant>
    <organismsDiffer>false</organismsDiffer>
    <experiments>3</experiments>
</comment>
<comment type="interaction">
    <interactant intactId="EBI-2118090">
        <id>Q7LBR1</id>
    </interactant>
    <interactant intactId="EBI-2118090">
        <id>Q7LBR1</id>
        <label>CHMP1B</label>
    </interactant>
    <organismsDiffer>false</organismsDiffer>
    <experiments>3</experiments>
</comment>
<comment type="interaction">
    <interactant intactId="EBI-2118090">
        <id>Q7LBR1</id>
    </interactant>
    <interactant intactId="EBI-15788863">
        <id>P53990-4</id>
        <label>IST1</label>
    </interactant>
    <organismsDiffer>false</organismsDiffer>
    <experiments>3</experiments>
</comment>
<comment type="interaction">
    <interactant intactId="EBI-2118090">
        <id>Q7LBR1</id>
    </interactant>
    <interactant intactId="EBI-2691489">
        <id>Q8WV92</id>
        <label>MITD1</label>
    </interactant>
    <organismsDiffer>false</organismsDiffer>
    <experiments>3</experiments>
</comment>
<comment type="interaction">
    <interactant intactId="EBI-2118090">
        <id>Q7LBR1</id>
    </interactant>
    <interactant intactId="EBI-79165">
        <id>Q9NRD5</id>
        <label>PICK1</label>
    </interactant>
    <organismsDiffer>false</organismsDiffer>
    <experiments>3</experiments>
</comment>
<comment type="interaction">
    <interactant intactId="EBI-2118090">
        <id>Q7LBR1</id>
    </interactant>
    <interactant intactId="EBI-745098">
        <id>P62491</id>
        <label>RAB11A</label>
    </interactant>
    <organismsDiffer>false</organismsDiffer>
    <experiments>3</experiments>
</comment>
<comment type="interaction">
    <interactant intactId="EBI-2118090">
        <id>Q7LBR1</id>
    </interactant>
    <interactant intactId="EBI-1045395">
        <id>O75643</id>
        <label>SNRNP200</label>
    </interactant>
    <organismsDiffer>false</organismsDiffer>
    <experiments>3</experiments>
</comment>
<comment type="interaction">
    <interactant intactId="EBI-2118090">
        <id>Q7LBR1</id>
    </interactant>
    <interactant intactId="EBI-396676">
        <id>O95630</id>
        <label>STAMBP</label>
    </interactant>
    <organismsDiffer>false</organismsDiffer>
    <experiments>21</experiments>
</comment>
<comment type="interaction">
    <interactant intactId="EBI-2118090">
        <id>Q7LBR1</id>
    </interactant>
    <interactant intactId="EBI-1050865">
        <id>P40818</id>
        <label>USP8</label>
    </interactant>
    <organismsDiffer>false</organismsDiffer>
    <experiments>5</experiments>
</comment>
<comment type="interaction">
    <interactant intactId="EBI-2118090">
        <id>Q7LBR1</id>
    </interactant>
    <interactant intactId="EBI-1171942">
        <id>Q9UN37</id>
        <label>VPS4A</label>
    </interactant>
    <organismsDiffer>false</organismsDiffer>
    <experiments>4</experiments>
</comment>
<comment type="interaction">
    <interactant intactId="EBI-2118090">
        <id>Q7LBR1</id>
    </interactant>
    <interactant intactId="EBI-740160">
        <id>Q9NP79</id>
        <label>VTA1</label>
    </interactant>
    <organismsDiffer>false</organismsDiffer>
    <experiments>4</experiments>
</comment>
<comment type="subcellular location">
    <subcellularLocation>
        <location>Cytoplasm</location>
        <location>Cytosol</location>
    </subcellularLocation>
    <subcellularLocation>
        <location>Endosome</location>
    </subcellularLocation>
    <subcellularLocation>
        <location evidence="15">Late endosome membrane</location>
        <topology evidence="15">Peripheral membrane protein</topology>
    </subcellularLocation>
    <text>Localizes to the midbody of dividing cells, colocalizing with CEP55 and CHMP5. Localized at the periphery of the Fleming body.</text>
</comment>
<comment type="tissue specificity">
    <text evidence="3">Widely expressed. Expressed in pancreas, kidney, skeletal muscle, liver, lung, placenta and brain.</text>
</comment>
<comment type="similarity">
    <text evidence="15">Belongs to the SNF7 family.</text>
</comment>
<comment type="sequence caution" evidence="15">
    <conflict type="erroneous initiation">
        <sequence resource="EMBL-CDS" id="AAG01449"/>
    </conflict>
</comment>
<organism>
    <name type="scientific">Homo sapiens</name>
    <name type="common">Human</name>
    <dbReference type="NCBI Taxonomy" id="9606"/>
    <lineage>
        <taxon>Eukaryota</taxon>
        <taxon>Metazoa</taxon>
        <taxon>Chordata</taxon>
        <taxon>Craniata</taxon>
        <taxon>Vertebrata</taxon>
        <taxon>Euteleostomi</taxon>
        <taxon>Mammalia</taxon>
        <taxon>Eutheria</taxon>
        <taxon>Euarchontoglires</taxon>
        <taxon>Primates</taxon>
        <taxon>Haplorrhini</taxon>
        <taxon>Catarrhini</taxon>
        <taxon>Hominidae</taxon>
        <taxon>Homo</taxon>
    </lineage>
</organism>
<feature type="chain" id="PRO_0000211454" description="Charged multivesicular body protein 1b">
    <location>
        <begin position="1"/>
        <end position="199"/>
    </location>
</feature>
<feature type="region of interest" description="Interaction with IST1">
    <location>
        <begin position="132"/>
        <end position="156"/>
    </location>
</feature>
<feature type="region of interest" description="Disordered" evidence="2">
    <location>
        <begin position="167"/>
        <end position="199"/>
    </location>
</feature>
<feature type="region of interest" description="Interaction with SPAST" evidence="6">
    <location>
        <begin position="174"/>
        <end position="199"/>
    </location>
</feature>
<feature type="region of interest" description="Interaction with VTA1">
    <location>
        <begin position="180"/>
        <end position="199"/>
    </location>
</feature>
<feature type="region of interest" description="Interaction with VPS4A, MITD1 and STAMBP" evidence="13">
    <location>
        <begin position="180"/>
        <end position="196"/>
    </location>
</feature>
<feature type="region of interest" description="Interaction with VPS4B">
    <location>
        <begin position="183"/>
        <end position="199"/>
    </location>
</feature>
<feature type="coiled-coil region" evidence="1">
    <location>
        <begin position="26"/>
        <end position="48"/>
    </location>
</feature>
<feature type="coiled-coil region" evidence="1">
    <location>
        <begin position="178"/>
        <end position="199"/>
    </location>
</feature>
<feature type="short sequence motif" description="MIT-interacting motif">
    <location>
        <begin position="186"/>
        <end position="196"/>
    </location>
</feature>
<feature type="compositionally biased region" description="Polar residues" evidence="2">
    <location>
        <begin position="170"/>
        <end position="182"/>
    </location>
</feature>
<feature type="mutagenesis site" description="Diminishes interaction with VPS4B." evidence="10">
    <original>DE</original>
    <variation>AA</variation>
    <location>
        <begin position="158"/>
        <end position="159"/>
    </location>
</feature>
<feature type="mutagenesis site" description="Abolishes interaction with SPAST and no effect on interaction with VPS4A; when associated with R-181 and R-184." evidence="11">
    <original>T</original>
    <variation>R</variation>
    <location>
        <position position="178"/>
    </location>
</feature>
<feature type="mutagenesis site" description="Abolishes interaction with SPAScT and no effect on interaction with VPS4A; when associated with R-178 and R-184." evidence="11">
    <original>A</original>
    <variation>R</variation>
    <location>
        <position position="181"/>
    </location>
</feature>
<feature type="mutagenesis site" description="Decreases interaction with SPAST." evidence="11">
    <original>E</original>
    <variation>A</variation>
    <location>
        <position position="184"/>
    </location>
</feature>
<feature type="mutagenesis site" description="Abolishes interaction with SPAST and no effect on interaction with VPS4A; when associated with R-178 and R-181." evidence="11">
    <original>E</original>
    <variation>R</variation>
    <location>
        <position position="184"/>
    </location>
</feature>
<feature type="mutagenesis site" description="Abolishes interaction with SPAST and VPS4A; when associated with A-192." evidence="11">
    <original>L</original>
    <variation>A</variation>
    <location>
        <position position="188"/>
    </location>
</feature>
<feature type="mutagenesis site" description="Abolishes interaction with SPAST and VPS4A; when associated with A-188." evidence="9 11">
    <original>L</original>
    <variation>A</variation>
    <location>
        <position position="192"/>
    </location>
</feature>
<feature type="mutagenesis site" description="Abolishes interaction with VPS4B." evidence="9 11">
    <original>L</original>
    <variation>A</variation>
    <location>
        <position position="192"/>
    </location>
</feature>
<feature type="mutagenesis site" description="Abolishes interaction with VPS4B." evidence="9">
    <original>L</original>
    <variation>A</variation>
    <location>
        <position position="195"/>
    </location>
</feature>
<feature type="helix" evidence="18">
    <location>
        <begin position="3"/>
        <end position="41"/>
    </location>
</feature>
<feature type="helix" evidence="18">
    <location>
        <begin position="45"/>
        <end position="105"/>
    </location>
</feature>
<feature type="helix" evidence="18">
    <location>
        <begin position="108"/>
        <end position="139"/>
    </location>
</feature>
<feature type="helix" evidence="18">
    <location>
        <begin position="141"/>
        <end position="143"/>
    </location>
</feature>
<feature type="helix" evidence="16">
    <location>
        <begin position="151"/>
        <end position="159"/>
    </location>
</feature>
<feature type="strand" evidence="18">
    <location>
        <begin position="166"/>
        <end position="168"/>
    </location>
</feature>
<feature type="helix" evidence="17">
    <location>
        <begin position="187"/>
        <end position="196"/>
    </location>
</feature>
<keyword id="KW-0002">3D-structure</keyword>
<keyword id="KW-0131">Cell cycle</keyword>
<keyword id="KW-0132">Cell division</keyword>
<keyword id="KW-0175">Coiled coil</keyword>
<keyword id="KW-0963">Cytoplasm</keyword>
<keyword id="KW-0967">Endosome</keyword>
<keyword id="KW-0472">Membrane</keyword>
<keyword id="KW-0653">Protein transport</keyword>
<keyword id="KW-1267">Proteomics identification</keyword>
<keyword id="KW-1185">Reference proteome</keyword>
<keyword id="KW-0813">Transport</keyword>
<proteinExistence type="evidence at protein level"/>
<name>CHM1B_HUMAN</name>
<sequence length="199" mass="22109">MSNMEKHLFNLKFAAKELSRSAKKCDKEEKAEKAKIKKAIQKGNMEVARIHAENAIRQKNQAVNFLRMSARVDAVAARVQTAVTMGKVTKSMAGVVKSMDATLKTMNLEKISALMDKFEHQFETLDVQTQQMEDTMSSTTTLTTPQNQVDMLLQEMADEAGLDLNMELPQGQTGSVGTSVASAEQDELSQRLARLRDQV</sequence>
<protein>
    <recommendedName>
        <fullName>Charged multivesicular body protein 1b</fullName>
    </recommendedName>
    <alternativeName>
        <fullName>CHMP1.5</fullName>
    </alternativeName>
    <alternativeName>
        <fullName>Chromatin-modifying protein 1b</fullName>
        <shortName>CHMP1b</shortName>
    </alternativeName>
    <alternativeName>
        <fullName>Vacuolar protein sorting-associated protein 46-2</fullName>
        <shortName>Vps46-2</shortName>
        <shortName>hVps46-2</shortName>
    </alternativeName>
</protein>
<accession>Q7LBR1</accession>
<accession>Q96E89</accession>
<accession>Q9HD41</accession>
<evidence type="ECO:0000255" key="1"/>
<evidence type="ECO:0000256" key="2">
    <source>
        <dbReference type="SAM" id="MobiDB-lite"/>
    </source>
</evidence>
<evidence type="ECO:0000269" key="3">
    <source>
    </source>
</evidence>
<evidence type="ECO:0000269" key="4">
    <source>
    </source>
</evidence>
<evidence type="ECO:0000269" key="5">
    <source>
    </source>
</evidence>
<evidence type="ECO:0000269" key="6">
    <source>
    </source>
</evidence>
<evidence type="ECO:0000269" key="7">
    <source>
    </source>
</evidence>
<evidence type="ECO:0000269" key="8">
    <source>
    </source>
</evidence>
<evidence type="ECO:0000269" key="9">
    <source>
    </source>
</evidence>
<evidence type="ECO:0000269" key="10">
    <source>
    </source>
</evidence>
<evidence type="ECO:0000269" key="11">
    <source>
    </source>
</evidence>
<evidence type="ECO:0000269" key="12">
    <source>
    </source>
</evidence>
<evidence type="ECO:0000269" key="13">
    <source>
    </source>
</evidence>
<evidence type="ECO:0000269" key="14">
    <source>
    </source>
</evidence>
<evidence type="ECO:0000305" key="15"/>
<evidence type="ECO:0007829" key="16">
    <source>
        <dbReference type="PDB" id="3EAB"/>
    </source>
</evidence>
<evidence type="ECO:0007829" key="17">
    <source>
        <dbReference type="PDB" id="4TXR"/>
    </source>
</evidence>
<evidence type="ECO:0007829" key="18">
    <source>
        <dbReference type="PDB" id="8V2S"/>
    </source>
</evidence>
<dbReference type="EMBL" id="AF306520">
    <property type="protein sequence ID" value="AAL48200.1"/>
    <property type="molecule type" value="Genomic_DNA"/>
</dbReference>
<dbReference type="EMBL" id="AF281064">
    <property type="protein sequence ID" value="AAG01449.1"/>
    <property type="status" value="ALT_INIT"/>
    <property type="molecule type" value="mRNA"/>
</dbReference>
<dbReference type="EMBL" id="BC065933">
    <property type="protein sequence ID" value="AAH65933.1"/>
    <property type="molecule type" value="mRNA"/>
</dbReference>
<dbReference type="EMBL" id="BC012733">
    <property type="protein sequence ID" value="AAH12733.3"/>
    <property type="molecule type" value="mRNA"/>
</dbReference>
<dbReference type="CCDS" id="CCDS54180.1"/>
<dbReference type="RefSeq" id="NP_065145.2">
    <property type="nucleotide sequence ID" value="NM_020412.4"/>
</dbReference>
<dbReference type="PDB" id="3EAB">
    <property type="method" value="X-ray"/>
    <property type="resolution" value="2.50 A"/>
    <property type="chains" value="G/H/I/J/K/L=148-197"/>
</dbReference>
<dbReference type="PDB" id="3JC1">
    <property type="method" value="EM"/>
    <property type="resolution" value="4.00 A"/>
    <property type="chains" value="Ab/Ad/Af/Ah/Aj/Al/An/Ap/Ar/At/Av/Ax/Az/Bb/Bd/Bf/Bh/Bj/Bl/Bn/Bp/Br/Bt/Bv/Bx/Bz/Cb/Cd/Cf/Ch=4-163"/>
</dbReference>
<dbReference type="PDB" id="4TXQ">
    <property type="method" value="X-ray"/>
    <property type="resolution" value="2.21 A"/>
    <property type="chains" value="C/D=176-199"/>
</dbReference>
<dbReference type="PDB" id="4TXR">
    <property type="method" value="X-ray"/>
    <property type="resolution" value="1.00 A"/>
    <property type="chains" value="B=176-199"/>
</dbReference>
<dbReference type="PDB" id="6E8G">
    <property type="method" value="EM"/>
    <property type="resolution" value="2.90 A"/>
    <property type="chains" value="AA/AB/B/CA/CB/D/EA/EB/F/GA/GB/H/IA/IB/J/KA/KB/L/MA/MB/N/OA/OB/P/QA/QB/R/SA/SB/T=1-199"/>
</dbReference>
<dbReference type="PDB" id="6TZ4">
    <property type="method" value="EM"/>
    <property type="resolution" value="3.20 A"/>
    <property type="chains" value="02/A/BA/BB/C/DA/DB/E/FA/FB/G/HA/HB/I/JA/JB/K/LA/LB/M/NA/NB/O/PA/PB/Q/RA/RB/S/TA=1-199"/>
</dbReference>
<dbReference type="PDB" id="6TZ5">
    <property type="method" value="EM"/>
    <property type="resolution" value="3.10 A"/>
    <property type="chains" value="AA/AB/B/CA/CB/D/EA/EB/F/GA/GB/H/IA/IB/J/KA/KB/L/MA/MB/N/OA/OB/P/QA/QB/R/SA/T/UA=1-199"/>
</dbReference>
<dbReference type="PDB" id="6TZ9">
    <property type="method" value="EM"/>
    <property type="resolution" value="6.20 A"/>
    <property type="chains" value="A/AA/B/C/D/E/F/G/H/I/J/K/L/M/N/O/P/Q/R/S/T/V/W/X/Y/Z=1-199"/>
</dbReference>
<dbReference type="PDB" id="8V2Q">
    <property type="method" value="EM"/>
    <property type="resolution" value="2.95 A"/>
    <property type="chains" value="A=1-199"/>
</dbReference>
<dbReference type="PDB" id="8V2R">
    <property type="method" value="EM"/>
    <property type="resolution" value="3.01 A"/>
    <property type="chains" value="A=1-199"/>
</dbReference>
<dbReference type="PDB" id="8V2S">
    <property type="method" value="EM"/>
    <property type="resolution" value="2.72 A"/>
    <property type="chains" value="A=1-199"/>
</dbReference>
<dbReference type="PDBsum" id="3EAB"/>
<dbReference type="PDBsum" id="3JC1"/>
<dbReference type="PDBsum" id="4TXQ"/>
<dbReference type="PDBsum" id="4TXR"/>
<dbReference type="PDBsum" id="6E8G"/>
<dbReference type="PDBsum" id="6TZ4"/>
<dbReference type="PDBsum" id="6TZ5"/>
<dbReference type="PDBsum" id="6TZ9"/>
<dbReference type="PDBsum" id="8V2Q"/>
<dbReference type="PDBsum" id="8V2R"/>
<dbReference type="PDBsum" id="8V2S"/>
<dbReference type="EMDB" id="EMD-20588"/>
<dbReference type="EMDB" id="EMD-20589"/>
<dbReference type="EMDB" id="EMD-20590"/>
<dbReference type="EMDB" id="EMD-27991"/>
<dbReference type="EMDB" id="EMD-28694"/>
<dbReference type="EMDB" id="EMD-28695"/>
<dbReference type="EMDB" id="EMD-28696"/>
<dbReference type="EMDB" id="EMD-28697"/>
<dbReference type="EMDB" id="EMD-28698"/>
<dbReference type="EMDB" id="EMD-28699"/>
<dbReference type="EMDB" id="EMD-28700"/>
<dbReference type="EMDB" id="EMD-28701"/>
<dbReference type="EMDB" id="EMD-28702"/>
<dbReference type="EMDB" id="EMD-28703"/>
<dbReference type="EMDB" id="EMD-28704"/>
<dbReference type="EMDB" id="EMD-28705"/>
<dbReference type="EMDB" id="EMD-28706"/>
<dbReference type="EMDB" id="EMD-28707"/>
<dbReference type="EMDB" id="EMD-28708"/>
<dbReference type="EMDB" id="EMD-28709"/>
<dbReference type="EMDB" id="EMD-28710"/>
<dbReference type="EMDB" id="EMD-28711"/>
<dbReference type="EMDB" id="EMD-28712"/>
<dbReference type="EMDB" id="EMD-28713"/>
<dbReference type="EMDB" id="EMD-28714"/>
<dbReference type="EMDB" id="EMD-28715"/>
<dbReference type="EMDB" id="EMD-28716"/>
<dbReference type="EMDB" id="EMD-28717"/>
<dbReference type="EMDB" id="EMD-28718"/>
<dbReference type="EMDB" id="EMD-28719"/>
<dbReference type="EMDB" id="EMD-28722"/>
<dbReference type="EMDB" id="EMD-42922"/>
<dbReference type="EMDB" id="EMD-42923"/>
<dbReference type="EMDB" id="EMD-42925"/>
<dbReference type="EMDB" id="EMD-42926"/>
<dbReference type="EMDB" id="EMD-42927"/>
<dbReference type="EMDB" id="EMD-42928"/>
<dbReference type="EMDB" id="EMD-42929"/>
<dbReference type="EMDB" id="EMD-42930"/>
<dbReference type="EMDB" id="EMD-42931"/>
<dbReference type="EMDB" id="EMD-42932"/>
<dbReference type="EMDB" id="EMD-42933"/>
<dbReference type="EMDB" id="EMD-42934"/>
<dbReference type="EMDB" id="EMD-42935"/>
<dbReference type="EMDB" id="EMD-42936"/>
<dbReference type="EMDB" id="EMD-42937"/>
<dbReference type="EMDB" id="EMD-6461"/>
<dbReference type="EMDB" id="EMD-9005"/>
<dbReference type="SMR" id="Q7LBR1"/>
<dbReference type="BioGRID" id="121394">
    <property type="interactions" value="47"/>
</dbReference>
<dbReference type="ComplexPortal" id="CPX-329">
    <property type="entry name" value="ESCRT-III complex"/>
</dbReference>
<dbReference type="CORUM" id="Q7LBR1"/>
<dbReference type="DIP" id="DIP-48534N"/>
<dbReference type="FunCoup" id="Q7LBR1">
    <property type="interactions" value="1579"/>
</dbReference>
<dbReference type="IntAct" id="Q7LBR1">
    <property type="interactions" value="45"/>
</dbReference>
<dbReference type="MINT" id="Q7LBR1"/>
<dbReference type="STRING" id="9606.ENSP00000432279"/>
<dbReference type="iPTMnet" id="Q7LBR1"/>
<dbReference type="PhosphoSitePlus" id="Q7LBR1"/>
<dbReference type="BioMuta" id="CHMP1B"/>
<dbReference type="DMDM" id="73917735"/>
<dbReference type="jPOST" id="Q7LBR1"/>
<dbReference type="MassIVE" id="Q7LBR1"/>
<dbReference type="PaxDb" id="9606-ENSP00000432279"/>
<dbReference type="PeptideAtlas" id="Q7LBR1"/>
<dbReference type="ProteomicsDB" id="68850"/>
<dbReference type="Pumba" id="Q7LBR1"/>
<dbReference type="Antibodypedia" id="54046">
    <property type="antibodies" value="114 antibodies from 24 providers"/>
</dbReference>
<dbReference type="DNASU" id="57132"/>
<dbReference type="Ensembl" id="ENST00000526991.3">
    <property type="protein sequence ID" value="ENSP00000432279.1"/>
    <property type="gene ID" value="ENSG00000255112.3"/>
</dbReference>
<dbReference type="GeneID" id="57132"/>
<dbReference type="KEGG" id="hsa:57132"/>
<dbReference type="MANE-Select" id="ENST00000526991.3">
    <property type="protein sequence ID" value="ENSP00000432279.1"/>
    <property type="RefSeq nucleotide sequence ID" value="NM_020412.5"/>
    <property type="RefSeq protein sequence ID" value="NP_065145.2"/>
</dbReference>
<dbReference type="UCSC" id="uc002kqe.4">
    <property type="organism name" value="human"/>
</dbReference>
<dbReference type="AGR" id="HGNC:24287"/>
<dbReference type="CTD" id="57132"/>
<dbReference type="DisGeNET" id="57132"/>
<dbReference type="GeneCards" id="CHMP1B"/>
<dbReference type="HGNC" id="HGNC:24287">
    <property type="gene designation" value="CHMP1B"/>
</dbReference>
<dbReference type="HPA" id="ENSG00000255112">
    <property type="expression patterns" value="Tissue enriched (skeletal)"/>
</dbReference>
<dbReference type="MIM" id="606486">
    <property type="type" value="gene"/>
</dbReference>
<dbReference type="neXtProt" id="NX_Q7LBR1"/>
<dbReference type="OpenTargets" id="ENSG00000255112"/>
<dbReference type="PharmGKB" id="PA142672110"/>
<dbReference type="VEuPathDB" id="HostDB:ENSG00000255112"/>
<dbReference type="eggNOG" id="KOG3232">
    <property type="taxonomic scope" value="Eukaryota"/>
</dbReference>
<dbReference type="GeneTree" id="ENSGT00950000182832"/>
<dbReference type="HOGENOM" id="CLU_080826_0_1_1"/>
<dbReference type="InParanoid" id="Q7LBR1"/>
<dbReference type="OMA" id="LMDKFKH"/>
<dbReference type="OrthoDB" id="10266568at2759"/>
<dbReference type="PAN-GO" id="Q7LBR1">
    <property type="GO annotations" value="5 GO annotations based on evolutionary models"/>
</dbReference>
<dbReference type="PhylomeDB" id="Q7LBR1"/>
<dbReference type="TreeFam" id="TF300076"/>
<dbReference type="PathwayCommons" id="Q7LBR1"/>
<dbReference type="SignaLink" id="Q7LBR1"/>
<dbReference type="SIGNOR" id="Q7LBR1"/>
<dbReference type="BioGRID-ORCS" id="57132">
    <property type="hits" value="18 hits in 1156 CRISPR screens"/>
</dbReference>
<dbReference type="EvolutionaryTrace" id="Q7LBR1"/>
<dbReference type="GeneWiki" id="CHMP1B"/>
<dbReference type="GenomeRNAi" id="57132"/>
<dbReference type="Pharos" id="Q7LBR1">
    <property type="development level" value="Tbio"/>
</dbReference>
<dbReference type="PRO" id="PR:Q7LBR1"/>
<dbReference type="Proteomes" id="UP000005640">
    <property type="component" value="Chromosome 18"/>
</dbReference>
<dbReference type="RNAct" id="Q7LBR1">
    <property type="molecule type" value="protein"/>
</dbReference>
<dbReference type="Bgee" id="ENSG00000255112">
    <property type="expression patterns" value="Expressed in gastrocnemius and 197 other cell types or tissues"/>
</dbReference>
<dbReference type="GO" id="GO:1904930">
    <property type="term" value="C:amphisome membrane"/>
    <property type="evidence" value="ECO:0000314"/>
    <property type="project" value="ComplexPortal"/>
</dbReference>
<dbReference type="GO" id="GO:0000421">
    <property type="term" value="C:autophagosome membrane"/>
    <property type="evidence" value="ECO:0000314"/>
    <property type="project" value="ComplexPortal"/>
</dbReference>
<dbReference type="GO" id="GO:0005829">
    <property type="term" value="C:cytosol"/>
    <property type="evidence" value="ECO:0007669"/>
    <property type="project" value="UniProtKB-SubCell"/>
</dbReference>
<dbReference type="GO" id="GO:0010008">
    <property type="term" value="C:endosome membrane"/>
    <property type="evidence" value="ECO:0000314"/>
    <property type="project" value="AgBase"/>
</dbReference>
<dbReference type="GO" id="GO:0000815">
    <property type="term" value="C:ESCRT III complex"/>
    <property type="evidence" value="ECO:0000314"/>
    <property type="project" value="UniProtKB"/>
</dbReference>
<dbReference type="GO" id="GO:0070062">
    <property type="term" value="C:extracellular exosome"/>
    <property type="evidence" value="ECO:0007005"/>
    <property type="project" value="UniProtKB"/>
</dbReference>
<dbReference type="GO" id="GO:0000776">
    <property type="term" value="C:kinetochore"/>
    <property type="evidence" value="ECO:0000314"/>
    <property type="project" value="ComplexPortal"/>
</dbReference>
<dbReference type="GO" id="GO:0005828">
    <property type="term" value="C:kinetochore microtubule"/>
    <property type="evidence" value="ECO:0000314"/>
    <property type="project" value="ComplexPortal"/>
</dbReference>
<dbReference type="GO" id="GO:0005765">
    <property type="term" value="C:lysosomal membrane"/>
    <property type="evidence" value="ECO:0000314"/>
    <property type="project" value="ComplexPortal"/>
</dbReference>
<dbReference type="GO" id="GO:0030117">
    <property type="term" value="C:membrane coat"/>
    <property type="evidence" value="ECO:0000314"/>
    <property type="project" value="UniProtKB"/>
</dbReference>
<dbReference type="GO" id="GO:0030496">
    <property type="term" value="C:midbody"/>
    <property type="evidence" value="ECO:0000314"/>
    <property type="project" value="HPA"/>
</dbReference>
<dbReference type="GO" id="GO:0005771">
    <property type="term" value="C:multivesicular body"/>
    <property type="evidence" value="ECO:0000318"/>
    <property type="project" value="GO_Central"/>
</dbReference>
<dbReference type="GO" id="GO:0032585">
    <property type="term" value="C:multivesicular body membrane"/>
    <property type="evidence" value="ECO:0000314"/>
    <property type="project" value="ComplexPortal"/>
</dbReference>
<dbReference type="GO" id="GO:0005643">
    <property type="term" value="C:nuclear pore"/>
    <property type="evidence" value="ECO:0000314"/>
    <property type="project" value="ComplexPortal"/>
</dbReference>
<dbReference type="GO" id="GO:0005654">
    <property type="term" value="C:nucleoplasm"/>
    <property type="evidence" value="ECO:0000314"/>
    <property type="project" value="HPA"/>
</dbReference>
<dbReference type="GO" id="GO:0005886">
    <property type="term" value="C:plasma membrane"/>
    <property type="evidence" value="ECO:0000314"/>
    <property type="project" value="ComplexPortal"/>
</dbReference>
<dbReference type="GO" id="GO:0042802">
    <property type="term" value="F:identical protein binding"/>
    <property type="evidence" value="ECO:0000353"/>
    <property type="project" value="IntAct"/>
</dbReference>
<dbReference type="GO" id="GO:0090541">
    <property type="term" value="F:MIT domain binding"/>
    <property type="evidence" value="ECO:0000314"/>
    <property type="project" value="UniProtKB"/>
</dbReference>
<dbReference type="GO" id="GO:0019904">
    <property type="term" value="F:protein domain specific binding"/>
    <property type="evidence" value="ECO:0000353"/>
    <property type="project" value="UniProtKB"/>
</dbReference>
<dbReference type="GO" id="GO:0097352">
    <property type="term" value="P:autophagosome maturation"/>
    <property type="evidence" value="ECO:0000315"/>
    <property type="project" value="ComplexPortal"/>
</dbReference>
<dbReference type="GO" id="GO:0006914">
    <property type="term" value="P:autophagy"/>
    <property type="evidence" value="ECO:0000315"/>
    <property type="project" value="ComplexPortal"/>
</dbReference>
<dbReference type="GO" id="GO:0051301">
    <property type="term" value="P:cell division"/>
    <property type="evidence" value="ECO:0000315"/>
    <property type="project" value="UniProtKB"/>
</dbReference>
<dbReference type="GO" id="GO:0032509">
    <property type="term" value="P:endosome transport via multivesicular body sorting pathway"/>
    <property type="evidence" value="ECO:0000318"/>
    <property type="project" value="GO_Central"/>
</dbReference>
<dbReference type="GO" id="GO:1904903">
    <property type="term" value="P:ESCRT III complex disassembly"/>
    <property type="evidence" value="ECO:0000303"/>
    <property type="project" value="ParkinsonsUK-UCL"/>
</dbReference>
<dbReference type="GO" id="GO:0045184">
    <property type="term" value="P:establishment of protein localization"/>
    <property type="evidence" value="ECO:0000315"/>
    <property type="project" value="UniProtKB"/>
</dbReference>
<dbReference type="GO" id="GO:1902774">
    <property type="term" value="P:late endosome to lysosome transport"/>
    <property type="evidence" value="ECO:0000315"/>
    <property type="project" value="ComplexPortal"/>
</dbReference>
<dbReference type="GO" id="GO:0045324">
    <property type="term" value="P:late endosome to vacuole transport"/>
    <property type="evidence" value="ECO:0000318"/>
    <property type="project" value="GO_Central"/>
</dbReference>
<dbReference type="GO" id="GO:0090148">
    <property type="term" value="P:membrane fission"/>
    <property type="evidence" value="ECO:0000303"/>
    <property type="project" value="ComplexPortal"/>
</dbReference>
<dbReference type="GO" id="GO:0061952">
    <property type="term" value="P:midbody abscission"/>
    <property type="evidence" value="ECO:0000315"/>
    <property type="project" value="UniProtKB"/>
</dbReference>
<dbReference type="GO" id="GO:0007080">
    <property type="term" value="P:mitotic metaphase chromosome alignment"/>
    <property type="evidence" value="ECO:0000315"/>
    <property type="project" value="UniProtKB"/>
</dbReference>
<dbReference type="GO" id="GO:0036258">
    <property type="term" value="P:multivesicular body assembly"/>
    <property type="evidence" value="ECO:0000303"/>
    <property type="project" value="ParkinsonsUK-UCL"/>
</dbReference>
<dbReference type="GO" id="GO:0071985">
    <property type="term" value="P:multivesicular body sorting pathway"/>
    <property type="evidence" value="ECO:0000314"/>
    <property type="project" value="ComplexPortal"/>
</dbReference>
<dbReference type="GO" id="GO:0061763">
    <property type="term" value="P:multivesicular body-lysosome fusion"/>
    <property type="evidence" value="ECO:0000303"/>
    <property type="project" value="ComplexPortal"/>
</dbReference>
<dbReference type="GO" id="GO:0031468">
    <property type="term" value="P:nuclear membrane reassembly"/>
    <property type="evidence" value="ECO:0000315"/>
    <property type="project" value="ComplexPortal"/>
</dbReference>
<dbReference type="GO" id="GO:0006997">
    <property type="term" value="P:nucleus organization"/>
    <property type="evidence" value="ECO:0000315"/>
    <property type="project" value="UniProtKB"/>
</dbReference>
<dbReference type="GO" id="GO:0001778">
    <property type="term" value="P:plasma membrane repair"/>
    <property type="evidence" value="ECO:0000314"/>
    <property type="project" value="ComplexPortal"/>
</dbReference>
<dbReference type="GO" id="GO:0015031">
    <property type="term" value="P:protein transport"/>
    <property type="evidence" value="ECO:0000318"/>
    <property type="project" value="GO_Central"/>
</dbReference>
<dbReference type="GO" id="GO:0010824">
    <property type="term" value="P:regulation of centrosome duplication"/>
    <property type="evidence" value="ECO:0000315"/>
    <property type="project" value="UniProtKB"/>
</dbReference>
<dbReference type="GO" id="GO:1901673">
    <property type="term" value="P:regulation of mitotic spindle assembly"/>
    <property type="evidence" value="ECO:0000315"/>
    <property type="project" value="UniProtKB"/>
</dbReference>
<dbReference type="GO" id="GO:0043162">
    <property type="term" value="P:ubiquitin-dependent protein catabolic process via the multivesicular body sorting pathway"/>
    <property type="evidence" value="ECO:0000314"/>
    <property type="project" value="ComplexPortal"/>
</dbReference>
<dbReference type="GO" id="GO:0051469">
    <property type="term" value="P:vesicle fusion with vacuole"/>
    <property type="evidence" value="ECO:0000303"/>
    <property type="project" value="ComplexPortal"/>
</dbReference>
<dbReference type="GO" id="GO:0046761">
    <property type="term" value="P:viral budding from plasma membrane"/>
    <property type="evidence" value="ECO:0000314"/>
    <property type="project" value="ComplexPortal"/>
</dbReference>
<dbReference type="GO" id="GO:0039702">
    <property type="term" value="P:viral budding via host ESCRT complex"/>
    <property type="evidence" value="ECO:0000314"/>
    <property type="project" value="UniProtKB"/>
</dbReference>
<dbReference type="Gene3D" id="6.10.140.1230">
    <property type="match status" value="1"/>
</dbReference>
<dbReference type="InterPro" id="IPR005024">
    <property type="entry name" value="Snf7_fam"/>
</dbReference>
<dbReference type="PANTHER" id="PTHR10476">
    <property type="entry name" value="CHARGED MULTIVESICULAR BODY PROTEIN"/>
    <property type="match status" value="1"/>
</dbReference>
<dbReference type="Pfam" id="PF03357">
    <property type="entry name" value="Snf7"/>
    <property type="match status" value="1"/>
</dbReference>
<gene>
    <name type="primary">CHMP1B</name>
    <name type="synonym">C18orf2</name>
</gene>
<reference key="1">
    <citation type="journal article" date="2001" name="Cytogenet. Cell Genet.">
        <title>C18orf2, a novel, highly conserved intronless gene within intron 5 of the GNAL gene on chromosome 18p11.</title>
        <authorList>
            <person name="Vuoristo J.T."/>
            <person name="Berrettini W.H."/>
            <person name="Ala-Kokko L."/>
        </authorList>
    </citation>
    <scope>NUCLEOTIDE SEQUENCE [GENOMIC DNA]</scope>
    <scope>TISSUE SPECIFICITY</scope>
</reference>
<reference key="2">
    <citation type="journal article" date="2001" name="J. Cell Sci.">
        <title>CHMP1 is a novel nuclear matrix protein affecting chromatin structure and cell-cycle progression.</title>
        <authorList>
            <person name="Stauffer D.R."/>
            <person name="Howard T.L."/>
            <person name="Nyun T."/>
            <person name="Hollenberg S.M."/>
        </authorList>
    </citation>
    <scope>NUCLEOTIDE SEQUENCE [MRNA]</scope>
</reference>
<reference key="3">
    <citation type="journal article" date="2004" name="Genome Res.">
        <title>The status, quality, and expansion of the NIH full-length cDNA project: the Mammalian Gene Collection (MGC).</title>
        <authorList>
            <consortium name="The MGC Project Team"/>
        </authorList>
    </citation>
    <scope>NUCLEOTIDE SEQUENCE [LARGE SCALE MRNA]</scope>
    <source>
        <tissue>Melanoma</tissue>
        <tissue>Ovary</tissue>
    </source>
</reference>
<reference key="4">
    <citation type="journal article" date="2003" name="Cell">
        <title>The protein network of HIV budding.</title>
        <authorList>
            <person name="von Schwedler U.K."/>
            <person name="Stuchell M."/>
            <person name="Mueller B."/>
            <person name="Ward D.M."/>
            <person name="Chung H.-Y."/>
            <person name="Morita E."/>
            <person name="Wang H.E."/>
            <person name="Davis T."/>
            <person name="He G.P."/>
            <person name="Cimbora D.M."/>
            <person name="Scott A."/>
            <person name="Kraeusslich H.-G."/>
            <person name="Kaplan J."/>
            <person name="Morham S.G."/>
            <person name="Sundquist W.I."/>
        </authorList>
    </citation>
    <scope>INTERACTION WITH CHMP1A; VPS4A AND VPS4B</scope>
</reference>
<reference key="5">
    <citation type="journal article" date="2003" name="Proc. Natl. Acad. Sci. U.S.A.">
        <title>Divergent retroviral late-budding domains recruit vacuolar protein sorting factors by using alternative adaptor proteins.</title>
        <authorList>
            <person name="Martin-Serrano J."/>
            <person name="Yarovoy A."/>
            <person name="Perez-Caballero D."/>
            <person name="Bieniasz P.D."/>
        </authorList>
    </citation>
    <scope>FUNCTION IN HIV-1 BUDDING</scope>
    <scope>INTERACTION WITH CHMP1A; CHMP2A AND VPS4A</scope>
</reference>
<reference key="6">
    <citation type="journal article" date="2003" name="Proc. Natl. Acad. Sci. U.S.A.">
        <authorList>
            <person name="Martin-Serrano J."/>
            <person name="Yarovoy A."/>
            <person name="Perez-Caballero D."/>
            <person name="Bieniasz P.D."/>
        </authorList>
    </citation>
    <scope>ERRATUM OF PUBMED:14519844</scope>
</reference>
<reference key="7">
    <citation type="journal article" date="2005" name="Hum. Mol. Genet.">
        <title>The hereditary spastic paraplegia protein spastin interacts with the ESCRT-III complex-associated endosomal protein CHMP1B.</title>
        <authorList>
            <person name="Reid E."/>
            <person name="Connell J.W."/>
            <person name="Edwards T.L."/>
            <person name="Duley S."/>
            <person name="Brown S.E."/>
            <person name="Sanderson C.M."/>
        </authorList>
    </citation>
    <scope>SUBCELLULAR LOCATION</scope>
    <scope>INTERACTION WITH SPAST</scope>
</reference>
<reference key="8">
    <citation type="journal article" date="2005" name="Proc. Natl. Acad. Sci. U.S.A.">
        <title>Structure and ESCRT-III protein interactions of the MIT domain of human VPS4A.</title>
        <authorList>
            <person name="Scott A."/>
            <person name="Gaspar J."/>
            <person name="Stuchell-Brereton M.D."/>
            <person name="Alam S.L."/>
            <person name="Skalicky J.J."/>
            <person name="Sundquist W.I."/>
        </authorList>
    </citation>
    <scope>INTERACTION WITH VPS4A</scope>
</reference>
<reference key="9">
    <citation type="journal article" date="2006" name="Genomics">
        <title>A systematic analysis of human CHMP protein interactions: additional MIT domain-containing proteins bind to multiple components of the human ESCRT III complex.</title>
        <authorList>
            <person name="Tsang H.T.H."/>
            <person name="Connell J.W."/>
            <person name="Brown S.E."/>
            <person name="Thompson A."/>
            <person name="Reid E."/>
            <person name="Sanderson C.M."/>
        </authorList>
    </citation>
    <scope>SUBCELLULAR LOCATION</scope>
    <scope>INTERACTION WITH STAMBP</scope>
</reference>
<reference key="10">
    <citation type="journal article" date="2007" name="Nature">
        <title>ESCRT-III recognition by VPS4 ATPases.</title>
        <authorList>
            <person name="Stuchell-Brereton M.D."/>
            <person name="Skalicky J.J."/>
            <person name="Kieffer C."/>
            <person name="Karren M.A."/>
            <person name="Ghaffarian S."/>
            <person name="Sundquist W.I."/>
        </authorList>
    </citation>
    <scope>INTERACTION WITH VPS4A AND VPS4B</scope>
    <scope>MUTAGENESIS OF LEU-192 AND LEU-195</scope>
</reference>
<reference key="11">
    <citation type="journal article" date="2008" name="Mol. Biol. Cell">
        <title>Novel interactions of ESCRT-III with LIP5 and VPS4 and their implications for ESCRT-III disassembly.</title>
        <authorList>
            <person name="Shim S."/>
            <person name="Merrill S.A."/>
            <person name="Hanson P.I."/>
        </authorList>
    </citation>
    <scope>INTERACTION WITH VTA1 AND VPS4B</scope>
    <scope>MUTAGENESIS OF 158-ASP-GLU-159</scope>
</reference>
<reference key="12">
    <citation type="journal article" date="2009" name="Mol. Biol. Cell">
        <title>Essential role of hIST1 in cytokinesis.</title>
        <authorList>
            <person name="Agromayor M."/>
            <person name="Carlton J.G."/>
            <person name="Phelan J.P."/>
            <person name="Matthews D.R."/>
            <person name="Carlin L.M."/>
            <person name="Ameer-Beg S."/>
            <person name="Bowers K."/>
            <person name="Martin-Serrano J."/>
        </authorList>
    </citation>
    <scope>INTERACTION WITH IST1; VTA1; VPS4A; MITD1 AND STAMBP</scope>
</reference>
<reference key="13">
    <citation type="journal article" date="2009" name="Mol. Biol. Cell">
        <title>Biochemical analyses of human IST1 and its function in cytokinesis.</title>
        <authorList>
            <person name="Bajorek M."/>
            <person name="Morita E."/>
            <person name="Skalicky J.J."/>
            <person name="Morham S.G."/>
            <person name="Babst M."/>
            <person name="Sundquist W.I."/>
        </authorList>
    </citation>
    <scope>FUNCTION</scope>
    <scope>INTERACTION WITH IST1</scope>
</reference>
<reference key="14">
    <citation type="journal article" date="2011" name="BMC Syst. Biol.">
        <title>Initial characterization of the human central proteome.</title>
        <authorList>
            <person name="Burkard T.R."/>
            <person name="Planyavsky M."/>
            <person name="Kaupe I."/>
            <person name="Breitwieser F.P."/>
            <person name="Buerckstuemmer T."/>
            <person name="Bennett K.L."/>
            <person name="Superti-Furga G."/>
            <person name="Colinge J."/>
        </authorList>
    </citation>
    <scope>IDENTIFICATION BY MASS SPECTROMETRY [LARGE SCALE ANALYSIS]</scope>
</reference>
<reference key="15">
    <citation type="journal article" date="2011" name="J. Virol.">
        <title>Mechanism of inhibition of retrovirus release from cells by interferon-induced gene ISG15.</title>
        <authorList>
            <person name="Kuang Z."/>
            <person name="Seo E.J."/>
            <person name="Leis J."/>
        </authorList>
    </citation>
    <scope>INTERACTION WITH VPS4A</scope>
</reference>
<reference key="16">
    <citation type="journal article" date="2014" name="J. Proteomics">
        <title>An enzyme assisted RP-RPLC approach for in-depth analysis of human liver phosphoproteome.</title>
        <authorList>
            <person name="Bian Y."/>
            <person name="Song C."/>
            <person name="Cheng K."/>
            <person name="Dong M."/>
            <person name="Wang F."/>
            <person name="Huang J."/>
            <person name="Sun D."/>
            <person name="Wang L."/>
            <person name="Ye M."/>
            <person name="Zou H."/>
        </authorList>
    </citation>
    <scope>IDENTIFICATION BY MASS SPECTROMETRY [LARGE SCALE ANALYSIS]</scope>
    <source>
        <tissue>Liver</tissue>
    </source>
</reference>
<reference key="17">
    <citation type="journal article" date="2008" name="Nat. Struct. Mol. Biol.">
        <title>Structural basis for midbody targeting of spastin by the ESCRT-III protein CHMP1B.</title>
        <authorList>
            <person name="Yang D."/>
            <person name="Rismanchi N."/>
            <person name="Renvoise B."/>
            <person name="Lippincott-Schwartz J."/>
            <person name="Blackstone C."/>
            <person name="Hurley J.H."/>
        </authorList>
    </citation>
    <scope>X-RAY CRYSTALLOGRAPHY (2.5 ANGSTROMS) OF 145-194 IN COMPLEX WITH SPAST</scope>
    <scope>SUBCELLULAR LOCATION</scope>
    <scope>INTERACTION WITH VPS4A</scope>
    <scope>MUTAGENESIS OF THR-178; ALA-181; GLU-184; LEU-188 AND LEU-192</scope>
</reference>